<keyword id="KW-0106">Calcium</keyword>
<keyword id="KW-0963">Cytoplasm</keyword>
<keyword id="KW-0968">Cytoplasmic vesicle</keyword>
<keyword id="KW-0378">Hydrolase</keyword>
<keyword id="KW-0442">Lipid degradation</keyword>
<keyword id="KW-0443">Lipid metabolism</keyword>
<keyword id="KW-0479">Metal-binding</keyword>
<keyword id="KW-0597">Phosphoprotein</keyword>
<keyword id="KW-1185">Reference proteome</keyword>
<sequence length="741" mass="83809">MSNIIVEHQYSHRLKLTVVRAENVTKGAFGDLLDTPDPYVELSVPTTPESRKRTRHINNDINPKWNETFEFILDPNQSNVLEVTLMDANYVMDETLGTAKYSLSKLKVAQMEHVTLSIGKTTKVFLDLLLEVCASTDLRFSMTLCDQEKLFMQTRRDRVMLSIKKLLKMENPRFLPSSPREVPTIAILGSGGGFRAMVGFSGVMKALYESGVFDCATYVAGLSGSTWYMSMLYSHPEFPAKGPGDINKELMNRVSNNPLKLLLPQNINRYVKALWKKKSAGQPVTFTDIFGMLIGETLIPGRMNIKLSSLKGKINEGQSPLPLFTCLHVKPDVSELMFADWVEFSPYEIGMAKYGTFMSPGLFGSKFFMGSVVKQYEENPLHFLMGVWGSAFSILFNRVLGVKETTSSSTMEEELEQIKPEHIVGDDSADNEEETQRGGTESADAEDERQRHAQASWVQRMLTSIMGDTTLFTTREGRAGKVHNFMLGLNLNSTLPFSPFSGITHQTSLEEEVDAVTDPDEFERIYEPLDVKSKKIHVVDSGLTFNLPYPLILRCQRGVDLIISFDFSARPSDSSPPFKELLLAEKWARMNKLPFPKIDSKVFDREGLKECYVFKPAKGDKNCPTIIHFVLANINFRNFKAPGVPRDSDKDIEFGDFDIFDEPASPYSTFNFKYNNQAFKRLHDLMEFNTLNNIEVIKEAIKDSILLRRENPARCSVSLSLSEIENKKFLKRDNSIAKRPT</sequence>
<organism>
    <name type="scientific">Danio rerio</name>
    <name type="common">Zebrafish</name>
    <name type="synonym">Brachydanio rerio</name>
    <dbReference type="NCBI Taxonomy" id="7955"/>
    <lineage>
        <taxon>Eukaryota</taxon>
        <taxon>Metazoa</taxon>
        <taxon>Chordata</taxon>
        <taxon>Craniata</taxon>
        <taxon>Vertebrata</taxon>
        <taxon>Euteleostomi</taxon>
        <taxon>Actinopterygii</taxon>
        <taxon>Neopterygii</taxon>
        <taxon>Teleostei</taxon>
        <taxon>Ostariophysi</taxon>
        <taxon>Cypriniformes</taxon>
        <taxon>Danionidae</taxon>
        <taxon>Danioninae</taxon>
        <taxon>Danio</taxon>
    </lineage>
</organism>
<protein>
    <recommendedName>
        <fullName>Cytosolic phospholipase A2</fullName>
        <shortName>cPLA2</shortName>
    </recommendedName>
    <alternativeName>
        <fullName>Phospholipase A2 group IVA</fullName>
    </alternativeName>
    <domain>
        <recommendedName>
            <fullName>Phospholipase A2</fullName>
            <ecNumber>3.1.1.4</ecNumber>
        </recommendedName>
        <alternativeName>
            <fullName>Phosphatidylcholine 2-acylhydrolase</fullName>
        </alternativeName>
    </domain>
    <domain>
        <recommendedName>
            <fullName>Lysophospholipase</fullName>
            <ecNumber>3.1.1.5</ecNumber>
        </recommendedName>
    </domain>
</protein>
<reference key="1">
    <citation type="journal article" date="1994" name="J. Biol. Chem.">
        <title>Delineation of two functionally distinct domains of cytosolic phospholipase A2, a regulatory Ca(2+)-dependent lipid-binding domain and a Ca(2+)-independent catalytic domain.</title>
        <authorList>
            <person name="Nalefski E.A."/>
            <person name="Sultzman L.A."/>
            <person name="Martin D.M."/>
            <person name="Kriz R.W."/>
            <person name="Towler P.S."/>
            <person name="Knopf J.L."/>
            <person name="Clark J.D."/>
        </authorList>
    </citation>
    <scope>NUCLEOTIDE SEQUENCE [MRNA]</scope>
    <source>
        <tissue>Embryo</tissue>
    </source>
</reference>
<proteinExistence type="evidence at transcript level"/>
<name>PA24A_DANRE</name>
<accession>P50392</accession>
<gene>
    <name type="primary">pla2g4a</name>
    <name type="synonym">cpla2</name>
    <name type="synonym">pla2g4</name>
</gene>
<feature type="chain" id="PRO_0000187265" description="Cytosolic phospholipase A2">
    <location>
        <begin position="1"/>
        <end position="741"/>
    </location>
</feature>
<feature type="domain" description="C2" evidence="2">
    <location>
        <begin position="1"/>
        <end position="116"/>
    </location>
</feature>
<feature type="domain" description="PLA2c" evidence="3">
    <location>
        <begin position="132"/>
        <end position="729"/>
    </location>
</feature>
<feature type="region of interest" description="Phospholipid binding" evidence="5">
    <location>
        <begin position="1"/>
        <end position="172"/>
    </location>
</feature>
<feature type="region of interest" description="Disordered" evidence="4">
    <location>
        <begin position="406"/>
        <end position="453"/>
    </location>
</feature>
<feature type="compositionally biased region" description="Basic and acidic residues" evidence="4">
    <location>
        <begin position="416"/>
        <end position="425"/>
    </location>
</feature>
<feature type="active site" description="Nucleophile" evidence="1">
    <location>
        <position position="223"/>
    </location>
</feature>
<feature type="active site" description="Proton acceptor" evidence="1">
    <location>
        <position position="540"/>
    </location>
</feature>
<feature type="binding site" evidence="1">
    <location>
        <position position="34"/>
    </location>
    <ligand>
        <name>Ca(2+)</name>
        <dbReference type="ChEBI" id="CHEBI:29108"/>
        <label>1</label>
    </ligand>
</feature>
<feature type="binding site" evidence="1">
    <location>
        <position position="34"/>
    </location>
    <ligand>
        <name>Ca(2+)</name>
        <dbReference type="ChEBI" id="CHEBI:29108"/>
        <label>2</label>
    </ligand>
</feature>
<feature type="binding site" evidence="1">
    <location>
        <position position="35"/>
    </location>
    <ligand>
        <name>Ca(2+)</name>
        <dbReference type="ChEBI" id="CHEBI:29108"/>
        <label>1</label>
    </ligand>
</feature>
<feature type="binding site" evidence="1">
    <location>
        <position position="37"/>
    </location>
    <ligand>
        <name>Ca(2+)</name>
        <dbReference type="ChEBI" id="CHEBI:29108"/>
        <label>1</label>
    </ligand>
</feature>
<feature type="binding site" evidence="1">
    <location>
        <position position="37"/>
    </location>
    <ligand>
        <name>Ca(2+)</name>
        <dbReference type="ChEBI" id="CHEBI:29108"/>
        <label>2</label>
    </ligand>
</feature>
<feature type="binding site" evidence="1">
    <location>
        <position position="59"/>
    </location>
    <ligand>
        <name>Ca(2+)</name>
        <dbReference type="ChEBI" id="CHEBI:29108"/>
        <label>1</label>
    </ligand>
</feature>
<feature type="binding site" evidence="1">
    <location>
        <position position="87"/>
    </location>
    <ligand>
        <name>Ca(2+)</name>
        <dbReference type="ChEBI" id="CHEBI:29108"/>
        <label>2</label>
    </ligand>
</feature>
<feature type="binding site" evidence="1">
    <location>
        <position position="88"/>
    </location>
    <ligand>
        <name>Ca(2+)</name>
        <dbReference type="ChEBI" id="CHEBI:29108"/>
        <label>2</label>
    </ligand>
</feature>
<feature type="binding site" evidence="1">
    <location>
        <position position="89"/>
    </location>
    <ligand>
        <name>Ca(2+)</name>
        <dbReference type="ChEBI" id="CHEBI:29108"/>
        <label>2</label>
    </ligand>
</feature>
<feature type="modified residue" description="Phosphoserine; by MAPK" evidence="1">
    <location>
        <position position="498"/>
    </location>
</feature>
<evidence type="ECO:0000250" key="1"/>
<evidence type="ECO:0000255" key="2">
    <source>
        <dbReference type="PROSITE-ProRule" id="PRU00041"/>
    </source>
</evidence>
<evidence type="ECO:0000255" key="3">
    <source>
        <dbReference type="PROSITE-ProRule" id="PRU00555"/>
    </source>
</evidence>
<evidence type="ECO:0000256" key="4">
    <source>
        <dbReference type="SAM" id="MobiDB-lite"/>
    </source>
</evidence>
<evidence type="ECO:0000305" key="5"/>
<dbReference type="EC" id="3.1.1.4"/>
<dbReference type="EC" id="3.1.1.5"/>
<dbReference type="EMBL" id="U10330">
    <property type="protein sequence ID" value="AAA53229.1"/>
    <property type="molecule type" value="mRNA"/>
</dbReference>
<dbReference type="PIR" id="B54908">
    <property type="entry name" value="B54908"/>
</dbReference>
<dbReference type="RefSeq" id="NP_571370.1">
    <property type="nucleotide sequence ID" value="NM_131295.2"/>
</dbReference>
<dbReference type="SMR" id="P50392"/>
<dbReference type="FunCoup" id="P50392">
    <property type="interactions" value="449"/>
</dbReference>
<dbReference type="STRING" id="7955.ENSDARP00000090686"/>
<dbReference type="PaxDb" id="7955-ENSDARP00000090686"/>
<dbReference type="GeneID" id="30554"/>
<dbReference type="KEGG" id="dre:30554"/>
<dbReference type="AGR" id="ZFIN:ZDB-GENE-990415-45"/>
<dbReference type="CTD" id="30554"/>
<dbReference type="ZFIN" id="ZDB-GENE-990415-45">
    <property type="gene designation" value="pla2g4aa"/>
</dbReference>
<dbReference type="eggNOG" id="KOG1012">
    <property type="taxonomic scope" value="Eukaryota"/>
</dbReference>
<dbReference type="eggNOG" id="KOG1325">
    <property type="taxonomic scope" value="Eukaryota"/>
</dbReference>
<dbReference type="InParanoid" id="P50392"/>
<dbReference type="OrthoDB" id="419768at2759"/>
<dbReference type="PhylomeDB" id="P50392"/>
<dbReference type="BRENDA" id="3.1.1.4">
    <property type="organism ID" value="928"/>
</dbReference>
<dbReference type="Reactome" id="R-DRE-111995">
    <property type="pathway name" value="phospho-PLA2 pathway"/>
</dbReference>
<dbReference type="Reactome" id="R-DRE-1482788">
    <property type="pathway name" value="Acyl chain remodelling of PC"/>
</dbReference>
<dbReference type="Reactome" id="R-DRE-1482798">
    <property type="pathway name" value="Acyl chain remodeling of CL"/>
</dbReference>
<dbReference type="Reactome" id="R-DRE-1482801">
    <property type="pathway name" value="Acyl chain remodelling of PS"/>
</dbReference>
<dbReference type="Reactome" id="R-DRE-1482839">
    <property type="pathway name" value="Acyl chain remodelling of PE"/>
</dbReference>
<dbReference type="Reactome" id="R-DRE-1482922">
    <property type="pathway name" value="Acyl chain remodelling of PI"/>
</dbReference>
<dbReference type="Reactome" id="R-DRE-1482925">
    <property type="pathway name" value="Acyl chain remodelling of PG"/>
</dbReference>
<dbReference type="Reactome" id="R-DRE-1483115">
    <property type="pathway name" value="Hydrolysis of LPC"/>
</dbReference>
<dbReference type="Reactome" id="R-DRE-1483166">
    <property type="pathway name" value="Synthesis of PA"/>
</dbReference>
<dbReference type="Reactome" id="R-DRE-2142753">
    <property type="pathway name" value="Arachidonate metabolism"/>
</dbReference>
<dbReference type="Reactome" id="R-DRE-418592">
    <property type="pathway name" value="ADP signalling through P2Y purinoceptor 1"/>
</dbReference>
<dbReference type="Reactome" id="R-DRE-432142">
    <property type="pathway name" value="Platelet sensitization by LDL"/>
</dbReference>
<dbReference type="Reactome" id="R-DRE-6811436">
    <property type="pathway name" value="COPI-independent Golgi-to-ER retrograde traffic"/>
</dbReference>
<dbReference type="PRO" id="PR:P50392"/>
<dbReference type="Proteomes" id="UP000000437">
    <property type="component" value="Chromosome 2"/>
</dbReference>
<dbReference type="GO" id="GO:0031410">
    <property type="term" value="C:cytoplasmic vesicle"/>
    <property type="evidence" value="ECO:0007669"/>
    <property type="project" value="UniProtKB-KW"/>
</dbReference>
<dbReference type="GO" id="GO:0005829">
    <property type="term" value="C:cytosol"/>
    <property type="evidence" value="ECO:0000318"/>
    <property type="project" value="GO_Central"/>
</dbReference>
<dbReference type="GO" id="GO:0005783">
    <property type="term" value="C:endoplasmic reticulum"/>
    <property type="evidence" value="ECO:0000318"/>
    <property type="project" value="GO_Central"/>
</dbReference>
<dbReference type="GO" id="GO:0005794">
    <property type="term" value="C:Golgi apparatus"/>
    <property type="evidence" value="ECO:0000318"/>
    <property type="project" value="GO_Central"/>
</dbReference>
<dbReference type="GO" id="GO:0005634">
    <property type="term" value="C:nucleus"/>
    <property type="evidence" value="ECO:0000318"/>
    <property type="project" value="GO_Central"/>
</dbReference>
<dbReference type="GO" id="GO:0005509">
    <property type="term" value="F:calcium ion binding"/>
    <property type="evidence" value="ECO:0000318"/>
    <property type="project" value="GO_Central"/>
</dbReference>
<dbReference type="GO" id="GO:0047498">
    <property type="term" value="F:calcium-dependent phospholipase A2 activity"/>
    <property type="evidence" value="ECO:0000318"/>
    <property type="project" value="GO_Central"/>
</dbReference>
<dbReference type="GO" id="GO:0005544">
    <property type="term" value="F:calcium-dependent phospholipid binding"/>
    <property type="evidence" value="ECO:0000318"/>
    <property type="project" value="GO_Central"/>
</dbReference>
<dbReference type="GO" id="GO:0004622">
    <property type="term" value="F:lysophospholipase activity"/>
    <property type="evidence" value="ECO:0007669"/>
    <property type="project" value="UniProtKB-EC"/>
</dbReference>
<dbReference type="GO" id="GO:0004620">
    <property type="term" value="F:phospholipase activity"/>
    <property type="evidence" value="ECO:0000314"/>
    <property type="project" value="ZFIN"/>
</dbReference>
<dbReference type="GO" id="GO:0046475">
    <property type="term" value="P:glycerophospholipid catabolic process"/>
    <property type="evidence" value="ECO:0000318"/>
    <property type="project" value="GO_Central"/>
</dbReference>
<dbReference type="GO" id="GO:0090594">
    <property type="term" value="P:inflammatory response to wounding"/>
    <property type="evidence" value="ECO:0000315"/>
    <property type="project" value="ZFIN"/>
</dbReference>
<dbReference type="GO" id="GO:0001541">
    <property type="term" value="P:ovarian follicle development"/>
    <property type="evidence" value="ECO:0000270"/>
    <property type="project" value="ZFIN"/>
</dbReference>
<dbReference type="GO" id="GO:2000045">
    <property type="term" value="P:regulation of G1/S transition of mitotic cell cycle"/>
    <property type="evidence" value="ECO:0000316"/>
    <property type="project" value="ZFIN"/>
</dbReference>
<dbReference type="GO" id="GO:0009611">
    <property type="term" value="P:response to wounding"/>
    <property type="evidence" value="ECO:0000315"/>
    <property type="project" value="ZFIN"/>
</dbReference>
<dbReference type="CDD" id="cd04036">
    <property type="entry name" value="C2_cPLA2"/>
    <property type="match status" value="1"/>
</dbReference>
<dbReference type="CDD" id="cd07200">
    <property type="entry name" value="cPLA2_Grp-IVA"/>
    <property type="match status" value="1"/>
</dbReference>
<dbReference type="FunFam" id="2.60.40.150:FF:000030">
    <property type="entry name" value="Phospholipase A2"/>
    <property type="match status" value="1"/>
</dbReference>
<dbReference type="Gene3D" id="2.60.40.150">
    <property type="entry name" value="C2 domain"/>
    <property type="match status" value="1"/>
</dbReference>
<dbReference type="Gene3D" id="3.40.1090.10">
    <property type="entry name" value="Cytosolic phospholipase A2 catalytic domain"/>
    <property type="match status" value="1"/>
</dbReference>
<dbReference type="InterPro" id="IPR016035">
    <property type="entry name" value="Acyl_Trfase/lysoPLipase"/>
</dbReference>
<dbReference type="InterPro" id="IPR041847">
    <property type="entry name" value="C2_cPLA2"/>
</dbReference>
<dbReference type="InterPro" id="IPR000008">
    <property type="entry name" value="C2_dom"/>
</dbReference>
<dbReference type="InterPro" id="IPR035892">
    <property type="entry name" value="C2_domain_sf"/>
</dbReference>
<dbReference type="InterPro" id="IPR002642">
    <property type="entry name" value="LysoPLipase_cat_dom"/>
</dbReference>
<dbReference type="PANTHER" id="PTHR10728">
    <property type="entry name" value="CYTOSOLIC PHOSPHOLIPASE A2"/>
    <property type="match status" value="1"/>
</dbReference>
<dbReference type="PANTHER" id="PTHR10728:SF13">
    <property type="entry name" value="CYTOSOLIC PHOSPHOLIPASE A2"/>
    <property type="match status" value="1"/>
</dbReference>
<dbReference type="Pfam" id="PF00168">
    <property type="entry name" value="C2"/>
    <property type="match status" value="1"/>
</dbReference>
<dbReference type="Pfam" id="PF01735">
    <property type="entry name" value="PLA2_B"/>
    <property type="match status" value="1"/>
</dbReference>
<dbReference type="SMART" id="SM00239">
    <property type="entry name" value="C2"/>
    <property type="match status" value="1"/>
</dbReference>
<dbReference type="SMART" id="SM00022">
    <property type="entry name" value="PLAc"/>
    <property type="match status" value="1"/>
</dbReference>
<dbReference type="SUPFAM" id="SSF49562">
    <property type="entry name" value="C2 domain (Calcium/lipid-binding domain, CaLB)"/>
    <property type="match status" value="1"/>
</dbReference>
<dbReference type="SUPFAM" id="SSF52151">
    <property type="entry name" value="FabD/lysophospholipase-like"/>
    <property type="match status" value="1"/>
</dbReference>
<dbReference type="PROSITE" id="PS50004">
    <property type="entry name" value="C2"/>
    <property type="match status" value="1"/>
</dbReference>
<dbReference type="PROSITE" id="PS51210">
    <property type="entry name" value="PLA2C"/>
    <property type="match status" value="1"/>
</dbReference>
<comment type="function">
    <text>Selectively hydrolyzes arachidonyl phospholipids in the sn-2 position releasing arachidonic acid. Together with its lysophospholipid activity, it is implicated in the initiation of the inflammatory response.</text>
</comment>
<comment type="catalytic activity">
    <reaction>
        <text>a 1,2-diacyl-sn-glycero-3-phosphocholine + H2O = a 1-acyl-sn-glycero-3-phosphocholine + a fatty acid + H(+)</text>
        <dbReference type="Rhea" id="RHEA:15801"/>
        <dbReference type="ChEBI" id="CHEBI:15377"/>
        <dbReference type="ChEBI" id="CHEBI:15378"/>
        <dbReference type="ChEBI" id="CHEBI:28868"/>
        <dbReference type="ChEBI" id="CHEBI:57643"/>
        <dbReference type="ChEBI" id="CHEBI:58168"/>
        <dbReference type="EC" id="3.1.1.4"/>
    </reaction>
</comment>
<comment type="catalytic activity">
    <reaction>
        <text>a 1-acyl-sn-glycero-3-phosphocholine + H2O = sn-glycerol 3-phosphocholine + a fatty acid + H(+)</text>
        <dbReference type="Rhea" id="RHEA:15177"/>
        <dbReference type="ChEBI" id="CHEBI:15377"/>
        <dbReference type="ChEBI" id="CHEBI:15378"/>
        <dbReference type="ChEBI" id="CHEBI:16870"/>
        <dbReference type="ChEBI" id="CHEBI:28868"/>
        <dbReference type="ChEBI" id="CHEBI:58168"/>
        <dbReference type="EC" id="3.1.1.5"/>
    </reaction>
</comment>
<comment type="activity regulation">
    <text>Stimulated by agonists such as ATP, EGF, thrombin and bradykinin as well as by cytosolic Ca(2+).</text>
</comment>
<comment type="subcellular location">
    <subcellularLocation>
        <location evidence="1">Cytoplasm</location>
    </subcellularLocation>
    <subcellularLocation>
        <location evidence="1">Cytoplasmic vesicle</location>
    </subcellularLocation>
    <text evidence="1">Translocates to membrane vesicles in a calcium-dependent fashion.</text>
</comment>
<comment type="domain">
    <text evidence="1">The N-terminal C2 domain associates with lipid membranes upon calcium binding. It modulates enzyme activity by presenting the active site to its substrate in response to elevations of cytosolic Ca(2+) (By similarity).</text>
</comment>
<comment type="PTM">
    <text evidence="1">Activated by phosphorylation on a serine residue.</text>
</comment>